<comment type="function">
    <text evidence="1 2">ATP-binding component of the Arp2/3 complex, a multiprotein complex that mediates actin polymerization upon stimulation by nucleation-promoting factor (NPF). The Arp2/3 complex mediates the formation of branched actin networks in the cytoplasm, providing the force for cell motility (By similarity). Seems to contact the pointed end of the daughter actin filament (By similarity). In addition to its role in the cytoplasmic cytoskeleton, the Arp2/3 complex also promotes actin polymerization in the nucleus, thereby regulating gene transcription and repair of damaged DNA (By similarity). The Arp2/3 complex promotes homologous recombination (HR) repair in response to DNA damage by promoting nuclear actin polymerization, leading to drive motility of double-strand breaks (DSBs) (By similarity).</text>
</comment>
<comment type="subunit">
    <text evidence="2">Component of the Arp2/3 complex composed of actr2/arp2, actr3/arp3, arpc1 (arpc1a or arpc1b), arpc2, arpc3, arpc4 and arpc5.</text>
</comment>
<comment type="subcellular location">
    <subcellularLocation>
        <location evidence="2">Cytoplasm</location>
        <location evidence="2">Cytoskeleton</location>
    </subcellularLocation>
    <subcellularLocation>
        <location evidence="2">Cell projection</location>
    </subcellularLocation>
    <subcellularLocation>
        <location evidence="1">Nucleus</location>
    </subcellularLocation>
</comment>
<comment type="similarity">
    <text evidence="3">Belongs to the actin family. ARP3 subfamily.</text>
</comment>
<evidence type="ECO:0000250" key="1">
    <source>
        <dbReference type="UniProtKB" id="P61158"/>
    </source>
</evidence>
<evidence type="ECO:0000250" key="2">
    <source>
        <dbReference type="UniProtKB" id="Q801P7"/>
    </source>
</evidence>
<evidence type="ECO:0000305" key="3"/>
<evidence type="ECO:0000312" key="4">
    <source>
        <dbReference type="EMBL" id="OCT63212.1"/>
    </source>
</evidence>
<reference key="1">
    <citation type="journal article" date="2016" name="Nature">
        <title>Genome evolution in the allotetraploid frog Xenopus laevis.</title>
        <authorList>
            <person name="Session A.M."/>
            <person name="Uno Y."/>
            <person name="Kwon T."/>
            <person name="Chapman J.A."/>
            <person name="Toyoda A."/>
            <person name="Takahashi S."/>
            <person name="Fukui A."/>
            <person name="Hikosaka A."/>
            <person name="Suzuki A."/>
            <person name="Kondo M."/>
            <person name="van Heeringen S.J."/>
            <person name="Quigley I."/>
            <person name="Heinz S."/>
            <person name="Ogino H."/>
            <person name="Ochi H."/>
            <person name="Hellsten U."/>
            <person name="Lyons J.B."/>
            <person name="Simakov O."/>
            <person name="Putnam N."/>
            <person name="Stites J."/>
            <person name="Kuroki Y."/>
            <person name="Tanaka T."/>
            <person name="Michiue T."/>
            <person name="Watanabe M."/>
            <person name="Bogdanovic O."/>
            <person name="Lister R."/>
            <person name="Georgiou G."/>
            <person name="Paranjpe S.S."/>
            <person name="van Kruijsbergen I."/>
            <person name="Shu S."/>
            <person name="Carlson J."/>
            <person name="Kinoshita T."/>
            <person name="Ohta Y."/>
            <person name="Mawaribuchi S."/>
            <person name="Jenkins J."/>
            <person name="Grimwood J."/>
            <person name="Schmutz J."/>
            <person name="Mitros T."/>
            <person name="Mozaffari S.V."/>
            <person name="Suzuki Y."/>
            <person name="Haramoto Y."/>
            <person name="Yamamoto T.S."/>
            <person name="Takagi C."/>
            <person name="Heald R."/>
            <person name="Miller K."/>
            <person name="Haudenschild C."/>
            <person name="Kitzman J."/>
            <person name="Nakayama T."/>
            <person name="Izutsu Y."/>
            <person name="Robert J."/>
            <person name="Fortriede J."/>
            <person name="Burns K."/>
            <person name="Lotay V."/>
            <person name="Karimi K."/>
            <person name="Yasuoka Y."/>
            <person name="Dichmann D.S."/>
            <person name="Flajnik M.F."/>
            <person name="Houston D.W."/>
            <person name="Shendure J."/>
            <person name="DuPasquier L."/>
            <person name="Vize P.D."/>
            <person name="Zorn A.M."/>
            <person name="Ito M."/>
            <person name="Marcotte E.M."/>
            <person name="Wallingford J.B."/>
            <person name="Ito Y."/>
            <person name="Asashima M."/>
            <person name="Ueno N."/>
            <person name="Matsuda Y."/>
            <person name="Veenstra G.J."/>
            <person name="Fujiyama A."/>
            <person name="Harland R.M."/>
            <person name="Taira M."/>
            <person name="Rokhsar D.S."/>
        </authorList>
    </citation>
    <scope>NUCLEOTIDE SEQUENCE [LARGE SCALE GENOMIC DNA]</scope>
    <source>
        <strain>J</strain>
    </source>
</reference>
<organism>
    <name type="scientific">Xenopus laevis</name>
    <name type="common">African clawed frog</name>
    <dbReference type="NCBI Taxonomy" id="8355"/>
    <lineage>
        <taxon>Eukaryota</taxon>
        <taxon>Metazoa</taxon>
        <taxon>Chordata</taxon>
        <taxon>Craniata</taxon>
        <taxon>Vertebrata</taxon>
        <taxon>Euteleostomi</taxon>
        <taxon>Amphibia</taxon>
        <taxon>Batrachia</taxon>
        <taxon>Anura</taxon>
        <taxon>Pipoidea</taxon>
        <taxon>Pipidae</taxon>
        <taxon>Xenopodinae</taxon>
        <taxon>Xenopus</taxon>
        <taxon>Xenopus</taxon>
    </lineage>
</organism>
<protein>
    <recommendedName>
        <fullName evidence="3">Actin-related protein 3-B</fullName>
    </recommendedName>
</protein>
<sequence length="418" mass="47262">MAARLPACVVDCGTGYTKLGYAGNTEPQFIIPSCIAIKESAKVGDQAQRRLMKGVDDLDFHIGDEAIDKPTYATKWPIRHGIVEDWDLMERFMEQVIFKYLRAEPEDHYFLLTEPPLNTPENREYTAEIMFESFNVPGLYIAVQAVLALAASWTSRQVGERTLTGTVIDSGDGVTHVIPVAEGYVIGSCIKHIPIAGRDITYFTQQLLRDREVGIPPEQSLETAKAVKERFSYVCPDLVKEFSKYDTDGAKWIKQYTGVNAVSKKEFSIDVGYERFLGPEIFFHPEFANPDFTQPISEVVDEVIQNCPIDVRRPLYKNIVLSGGSTMFRDFGRRLQRDVKRTVDARLKLSEELSGGRLKPKPIDVQVITHHMQRYAVWFGGSMLASTPEFYQVCHTKKDYEEIGPSICRHNPVFGVMS</sequence>
<keyword id="KW-0009">Actin-binding</keyword>
<keyword id="KW-0067">ATP-binding</keyword>
<keyword id="KW-0966">Cell projection</keyword>
<keyword id="KW-0963">Cytoplasm</keyword>
<keyword id="KW-0206">Cytoskeleton</keyword>
<keyword id="KW-0547">Nucleotide-binding</keyword>
<keyword id="KW-0539">Nucleus</keyword>
<keyword id="KW-1185">Reference proteome</keyword>
<gene>
    <name type="primary">actr3-b</name>
    <name evidence="4" type="ORF">XELAEV_18044311mg</name>
</gene>
<proteinExistence type="inferred from homology"/>
<feature type="chain" id="PRO_0000445572" description="Actin-related protein 3-B">
    <location>
        <begin position="1"/>
        <end position="418"/>
    </location>
</feature>
<accession>A0A1L8EV45</accession>
<dbReference type="EMBL" id="CM004482">
    <property type="protein sequence ID" value="OCT63212.1"/>
    <property type="molecule type" value="Genomic_DNA"/>
</dbReference>
<dbReference type="SMR" id="A0A1L8EV45"/>
<dbReference type="STRING" id="8355.A0A1L8EV45"/>
<dbReference type="PaxDb" id="8355-A0A1L8EV45"/>
<dbReference type="GeneID" id="108701232"/>
<dbReference type="KEGG" id="xla:108701232"/>
<dbReference type="AGR" id="Xenbase:XB-GENE-17335395"/>
<dbReference type="CTD" id="108701232"/>
<dbReference type="Xenbase" id="XB-GENE-17335395">
    <property type="gene designation" value="actr3.L"/>
</dbReference>
<dbReference type="OMA" id="GIHYPIR"/>
<dbReference type="OrthoDB" id="421448at2759"/>
<dbReference type="Proteomes" id="UP000186698">
    <property type="component" value="Chromosome 9_10L"/>
</dbReference>
<dbReference type="Proteomes" id="UP000694892">
    <property type="component" value="Chromosome 9_10L"/>
</dbReference>
<dbReference type="Bgee" id="108701232">
    <property type="expression patterns" value="Expressed in spleen and 19 other cell types or tissues"/>
</dbReference>
<dbReference type="GO" id="GO:0005885">
    <property type="term" value="C:Arp2/3 protein complex"/>
    <property type="evidence" value="ECO:0000250"/>
    <property type="project" value="UniProtKB"/>
</dbReference>
<dbReference type="GO" id="GO:0042995">
    <property type="term" value="C:cell projection"/>
    <property type="evidence" value="ECO:0007669"/>
    <property type="project" value="UniProtKB-SubCell"/>
</dbReference>
<dbReference type="GO" id="GO:0005737">
    <property type="term" value="C:cytoplasm"/>
    <property type="evidence" value="ECO:0007669"/>
    <property type="project" value="UniProtKB-KW"/>
</dbReference>
<dbReference type="GO" id="GO:0005634">
    <property type="term" value="C:nucleus"/>
    <property type="evidence" value="ECO:0000250"/>
    <property type="project" value="UniProtKB"/>
</dbReference>
<dbReference type="GO" id="GO:0035861">
    <property type="term" value="C:site of double-strand break"/>
    <property type="evidence" value="ECO:0000250"/>
    <property type="project" value="UniProtKB"/>
</dbReference>
<dbReference type="GO" id="GO:0003779">
    <property type="term" value="F:actin binding"/>
    <property type="evidence" value="ECO:0007669"/>
    <property type="project" value="UniProtKB-KW"/>
</dbReference>
<dbReference type="GO" id="GO:0005524">
    <property type="term" value="F:ATP binding"/>
    <property type="evidence" value="ECO:0007669"/>
    <property type="project" value="UniProtKB-KW"/>
</dbReference>
<dbReference type="GO" id="GO:0034314">
    <property type="term" value="P:Arp2/3 complex-mediated actin nucleation"/>
    <property type="evidence" value="ECO:0000318"/>
    <property type="project" value="GO_Central"/>
</dbReference>
<dbReference type="CDD" id="cd10221">
    <property type="entry name" value="ASKHA_NBD_Arp3-like"/>
    <property type="match status" value="1"/>
</dbReference>
<dbReference type="FunFam" id="3.30.420.40:FF:000029">
    <property type="entry name" value="Actin-related protein 3"/>
    <property type="match status" value="1"/>
</dbReference>
<dbReference type="FunFam" id="3.30.420.40:FF:000315">
    <property type="entry name" value="Actin-related protein 3"/>
    <property type="match status" value="1"/>
</dbReference>
<dbReference type="FunFam" id="3.30.420.40:FF:000803">
    <property type="entry name" value="Actin-related protein 3"/>
    <property type="match status" value="1"/>
</dbReference>
<dbReference type="FunFam" id="3.90.640.10:FF:000006">
    <property type="entry name" value="Actin-related protein 3 (ARP3)"/>
    <property type="match status" value="1"/>
</dbReference>
<dbReference type="FunFam" id="2.30.36.70:FF:000002">
    <property type="entry name" value="actin-related protein 3 isoform X1"/>
    <property type="match status" value="1"/>
</dbReference>
<dbReference type="Gene3D" id="3.30.420.40">
    <property type="match status" value="2"/>
</dbReference>
<dbReference type="Gene3D" id="2.30.36.70">
    <property type="entry name" value="Actin, Chain A, domain 2"/>
    <property type="match status" value="1"/>
</dbReference>
<dbReference type="Gene3D" id="3.90.640.10">
    <property type="entry name" value="Actin, Chain A, domain 4"/>
    <property type="match status" value="1"/>
</dbReference>
<dbReference type="InterPro" id="IPR004000">
    <property type="entry name" value="Actin"/>
</dbReference>
<dbReference type="InterPro" id="IPR020902">
    <property type="entry name" value="Actin/actin-like_CS"/>
</dbReference>
<dbReference type="InterPro" id="IPR043129">
    <property type="entry name" value="ATPase_NBD"/>
</dbReference>
<dbReference type="PANTHER" id="PTHR11937">
    <property type="entry name" value="ACTIN"/>
    <property type="match status" value="1"/>
</dbReference>
<dbReference type="Pfam" id="PF00022">
    <property type="entry name" value="Actin"/>
    <property type="match status" value="2"/>
</dbReference>
<dbReference type="SMART" id="SM00268">
    <property type="entry name" value="ACTIN"/>
    <property type="match status" value="1"/>
</dbReference>
<dbReference type="SUPFAM" id="SSF53067">
    <property type="entry name" value="Actin-like ATPase domain"/>
    <property type="match status" value="2"/>
</dbReference>
<dbReference type="PROSITE" id="PS01132">
    <property type="entry name" value="ACTINS_ACT_LIKE"/>
    <property type="match status" value="1"/>
</dbReference>
<name>ARP3B_XENLA</name>